<keyword id="KW-0010">Activator</keyword>
<keyword id="KW-0963">Cytoplasm</keyword>
<keyword id="KW-0238">DNA-binding</keyword>
<keyword id="KW-0539">Nucleus</keyword>
<keyword id="KW-0597">Phosphoprotein</keyword>
<keyword id="KW-1185">Reference proteome</keyword>
<keyword id="KW-0804">Transcription</keyword>
<keyword id="KW-0805">Transcription regulation</keyword>
<evidence type="ECO:0000250" key="1">
    <source>
        <dbReference type="UniProtKB" id="Q04206"/>
    </source>
</evidence>
<evidence type="ECO:0000250" key="2">
    <source>
        <dbReference type="UniProtKB" id="Q04207"/>
    </source>
</evidence>
<evidence type="ECO:0000255" key="3"/>
<evidence type="ECO:0000255" key="4">
    <source>
        <dbReference type="PROSITE-ProRule" id="PRU00265"/>
    </source>
</evidence>
<evidence type="ECO:0000256" key="5">
    <source>
        <dbReference type="SAM" id="MobiDB-lite"/>
    </source>
</evidence>
<evidence type="ECO:0000269" key="6">
    <source>
    </source>
</evidence>
<comment type="function">
    <text evidence="1">NF-kappa-B is a pleiotropic transcription factor present in almost all cell types and is the endpoint of a series of signal transduction events that are initiated by a vast array of stimuli related to many biological processes such as inflammation, immunity, differentiation, cell growth, tumorigenesis and apoptosis. NF-kappa-B is a homo- or heterodimeric complex formed by the Rel-like domain-containing proteins. The dimers bind at kappa-B sites in the DNA of their target genes and the individual dimers have distinct preferences for different kappa-B sites that they can bind with distinguishable affinity and specificity. Different dimer combinations act as transcriptional activators or repressors, respectively. NF-kappa-B is controlled by various mechanisms of post-translational modification and subcellular compartmentalization as well as by interactions with other cofactors or corepressors. NF-kappa-B complexes are held in the cytoplasm in an inactive state complexed with members of the NF-kappa-B inhibitor (I-kappa-B) family. In a conventional activation pathway, I-kappa-B is phosphorylated by I-kappa-B kinases (IKKs) in response to different activators, subsequently degraded thus liberating the active NF-kappa-B complex which translocates to the nucleus. RELA shows a weak DNA-binding site which could contribute directly to DNA binding in the NF-kappa-B complex.</text>
</comment>
<comment type="subunit">
    <text evidence="6">Component of the NF-kappa-B p65-p50 complex. Component of the NF-kappa-B p65-c-Rel complex. Component of the NF-kappa-B p65-p105 complex.</text>
</comment>
<comment type="subcellular location">
    <subcellularLocation>
        <location evidence="2">Nucleus</location>
    </subcellularLocation>
    <subcellularLocation>
        <location evidence="2">Cytoplasm</location>
    </subcellularLocation>
    <text evidence="1">Nuclear, but also found in the cytoplasm in an inactive form complexed to an inhibitor (I-kappa-B).</text>
</comment>
<comment type="tissue specificity">
    <text evidence="6">Spleen; lower level in brain.</text>
</comment>
<comment type="domain">
    <text evidence="1 2">The transcriptional activation domain 1/TA1 and the transcriptional activation domain 2/TA2 have direct transcriptional activation properties (By similarity). The 9aaTAD motif found within the transcriptional activation domain 2 is a conserved motif present in a large number of transcription factors that is required for their transcriptional transactivation activity (By similarity).</text>
</comment>
<gene>
    <name type="primary">RELA</name>
</gene>
<feature type="chain" id="PRO_0000205171" description="Transcription factor p65">
    <location>
        <begin position="1"/>
        <end position="558"/>
    </location>
</feature>
<feature type="domain" description="RHD" evidence="4">
    <location>
        <begin position="25"/>
        <end position="311"/>
    </location>
</feature>
<feature type="region of interest" description="Disordered" evidence="5">
    <location>
        <begin position="317"/>
        <end position="376"/>
    </location>
</feature>
<feature type="region of interest" description="Transcriptional activation domain 1" evidence="2">
    <location>
        <begin position="385"/>
        <end position="444"/>
    </location>
</feature>
<feature type="region of interest" description="Disordered" evidence="5">
    <location>
        <begin position="388"/>
        <end position="544"/>
    </location>
</feature>
<feature type="region of interest" description="Transcriptional activation domain 2" evidence="2">
    <location>
        <begin position="524"/>
        <end position="558"/>
    </location>
</feature>
<feature type="short sequence motif" description="Nuclear localization signal" evidence="3">
    <location>
        <begin position="306"/>
        <end position="309"/>
    </location>
</feature>
<feature type="short sequence motif" description="9aaTAD" evidence="3">
    <location>
        <begin position="542"/>
        <end position="558"/>
    </location>
</feature>
<feature type="compositionally biased region" description="Pro residues" evidence="5">
    <location>
        <begin position="342"/>
        <end position="351"/>
    </location>
</feature>
<feature type="compositionally biased region" description="Pro residues" evidence="5">
    <location>
        <begin position="358"/>
        <end position="376"/>
    </location>
</feature>
<feature type="compositionally biased region" description="Low complexity" evidence="5">
    <location>
        <begin position="418"/>
        <end position="433"/>
    </location>
</feature>
<feature type="compositionally biased region" description="Gly residues" evidence="5">
    <location>
        <begin position="454"/>
        <end position="463"/>
    </location>
</feature>
<feature type="compositionally biased region" description="Pro residues" evidence="5">
    <location>
        <begin position="526"/>
        <end position="535"/>
    </location>
</feature>
<feature type="modified residue" description="Phosphoserine; by PKA" evidence="3">
    <location>
        <position position="281"/>
    </location>
</feature>
<reference key="1">
    <citation type="journal article" date="1993" name="Gene">
        <title>Isolation of the chicken NF-kappa B p65 subunit-encoding cDNA and characterization of its products.</title>
        <authorList>
            <person name="Ikeda T."/>
            <person name="Honjo K."/>
            <person name="Hirota Y."/>
            <person name="Onodera T."/>
        </authorList>
    </citation>
    <scope>NUCLEOTIDE SEQUENCE [MRNA]</scope>
    <scope>IDENTIFICATION IN THE NF-KAPPA-B P65-P50 COMPLEX</scope>
    <scope>IDENTIFICATION IN THE NF-KAPPA-B P65-C-REL COMPLEX</scope>
    <scope>IDENTIFICATION IN THE NF-KAPPA-B P65-P105 COMPLEX</scope>
    <scope>TISSUE SPECIFICITY</scope>
    <source>
        <tissue>Spleen</tissue>
    </source>
</reference>
<organism>
    <name type="scientific">Gallus gallus</name>
    <name type="common">Chicken</name>
    <dbReference type="NCBI Taxonomy" id="9031"/>
    <lineage>
        <taxon>Eukaryota</taxon>
        <taxon>Metazoa</taxon>
        <taxon>Chordata</taxon>
        <taxon>Craniata</taxon>
        <taxon>Vertebrata</taxon>
        <taxon>Euteleostomi</taxon>
        <taxon>Archelosauria</taxon>
        <taxon>Archosauria</taxon>
        <taxon>Dinosauria</taxon>
        <taxon>Saurischia</taxon>
        <taxon>Theropoda</taxon>
        <taxon>Coelurosauria</taxon>
        <taxon>Aves</taxon>
        <taxon>Neognathae</taxon>
        <taxon>Galloanserae</taxon>
        <taxon>Galliformes</taxon>
        <taxon>Phasianidae</taxon>
        <taxon>Phasianinae</taxon>
        <taxon>Gallus</taxon>
    </lineage>
</organism>
<sequence length="558" mass="60072">MEPADLLPLYLQPEWGEQEPGGATPFVEILEQPKQRGMRFRYKCEGRSAGSIPGEHSTDSARTHPTIRVNHYRGPGRVRVSLVTKDPPHGPHPHELVGRHCQHGYYEAELSPERCVHSFQNLGIQCVKKRELEAAVAERIRTNNNPFNVPMEERGAEYDLSAVRLCFQVWVNGPGGLCPLPPVLSQPIYDNRAPSTAELRILPGDRNSGSCQGGDEIFLLCDKVQKEDIEVRFWAEGWEAKGSFAAADVHRQVAIVFRTPPFRERSLRHPVTVRMELQRPSDRQRSPPLDFRYLPHQGDLQCIEEKRKRTRDTFRAFVQRAPLPGLEPNPEPRPPRRIAVPSRPPPAPQQPPSMVGAPPAPLFPLGVPPASSPTPEPLAEALLQLQFDDGVGGSGPPPSTTTTTTTTQCALGGGIPDPGGSPLDLGALLGDPPFDTIDAAELQRLLGPPETPPGGIGAGGGFGELLSLPTNFGDPPSSTAATFGPSPPMLLSYPEAITRLVQCQTPGGSGGGGPPVGPPQDLGGPLHPPGAPPQPTEDSLPSLGDLDFSAFLSQFPSS</sequence>
<name>TF65_CHICK</name>
<protein>
    <recommendedName>
        <fullName>Transcription factor p65</fullName>
    </recommendedName>
    <alternativeName>
        <fullName>Nuclear factor NF-kappa-B p65 subunit</fullName>
    </alternativeName>
</protein>
<accession>P98152</accession>
<proteinExistence type="evidence at protein level"/>
<dbReference type="EMBL" id="D13721">
    <property type="protein sequence ID" value="BAA02874.1"/>
    <property type="molecule type" value="mRNA"/>
</dbReference>
<dbReference type="PIR" id="JC2004">
    <property type="entry name" value="JC2004"/>
</dbReference>
<dbReference type="RefSeq" id="NP_990460.1">
    <property type="nucleotide sequence ID" value="NM_205129.1"/>
</dbReference>
<dbReference type="SMR" id="P98152"/>
<dbReference type="FunCoup" id="P98152">
    <property type="interactions" value="1440"/>
</dbReference>
<dbReference type="STRING" id="9031.ENSGALP00000047666"/>
<dbReference type="GlyGen" id="P98152">
    <property type="glycosylation" value="1 site"/>
</dbReference>
<dbReference type="KEGG" id="gga:396027"/>
<dbReference type="VEuPathDB" id="HostDB:geneid_396027"/>
<dbReference type="InParanoid" id="P98152"/>
<dbReference type="OrthoDB" id="7881762at2759"/>
<dbReference type="PhylomeDB" id="P98152"/>
<dbReference type="Reactome" id="R-GGA-1227892">
    <property type="pathway name" value="TRAF6 mediated NF-kB activation"/>
</dbReference>
<dbReference type="Reactome" id="R-GGA-434001">
    <property type="pathway name" value="TAK1 activates NFkB by phosphorylation and activation of IKKs complex"/>
</dbReference>
<dbReference type="Reactome" id="R-GGA-434131">
    <property type="pathway name" value="NFkB activation mediated by RIP1 complexed with activated TLR3"/>
</dbReference>
<dbReference type="PRO" id="PR:P98152"/>
<dbReference type="Proteomes" id="UP000000539">
    <property type="component" value="Unassembled WGS sequence"/>
</dbReference>
<dbReference type="GO" id="GO:0005737">
    <property type="term" value="C:cytoplasm"/>
    <property type="evidence" value="ECO:0000250"/>
    <property type="project" value="UniProtKB"/>
</dbReference>
<dbReference type="GO" id="GO:0035525">
    <property type="term" value="C:NF-kappaB p50/p65 complex"/>
    <property type="evidence" value="ECO:0000318"/>
    <property type="project" value="GO_Central"/>
</dbReference>
<dbReference type="GO" id="GO:0005634">
    <property type="term" value="C:nucleus"/>
    <property type="evidence" value="ECO:0000250"/>
    <property type="project" value="UniProtKB"/>
</dbReference>
<dbReference type="GO" id="GO:0003677">
    <property type="term" value="F:DNA binding"/>
    <property type="evidence" value="ECO:0000250"/>
    <property type="project" value="UniProtKB"/>
</dbReference>
<dbReference type="GO" id="GO:0000981">
    <property type="term" value="F:DNA-binding transcription factor activity, RNA polymerase II-specific"/>
    <property type="evidence" value="ECO:0000318"/>
    <property type="project" value="GO_Central"/>
</dbReference>
<dbReference type="GO" id="GO:0000978">
    <property type="term" value="F:RNA polymerase II cis-regulatory region sequence-specific DNA binding"/>
    <property type="evidence" value="ECO:0000318"/>
    <property type="project" value="GO_Central"/>
</dbReference>
<dbReference type="GO" id="GO:0007249">
    <property type="term" value="P:canonical NF-kappaB signal transduction"/>
    <property type="evidence" value="ECO:0000318"/>
    <property type="project" value="GO_Central"/>
</dbReference>
<dbReference type="GO" id="GO:0070301">
    <property type="term" value="P:cellular response to hydrogen peroxide"/>
    <property type="evidence" value="ECO:0000250"/>
    <property type="project" value="UniProtKB"/>
</dbReference>
<dbReference type="GO" id="GO:0071222">
    <property type="term" value="P:cellular response to lipopolysaccharide"/>
    <property type="evidence" value="ECO:0000318"/>
    <property type="project" value="GO_Central"/>
</dbReference>
<dbReference type="GO" id="GO:0071356">
    <property type="term" value="P:cellular response to tumor necrosis factor"/>
    <property type="evidence" value="ECO:0000250"/>
    <property type="project" value="UniProtKB"/>
</dbReference>
<dbReference type="GO" id="GO:0006954">
    <property type="term" value="P:inflammatory response"/>
    <property type="evidence" value="ECO:0000318"/>
    <property type="project" value="GO_Central"/>
</dbReference>
<dbReference type="GO" id="GO:0045087">
    <property type="term" value="P:innate immune response"/>
    <property type="evidence" value="ECO:0000318"/>
    <property type="project" value="GO_Central"/>
</dbReference>
<dbReference type="GO" id="GO:0002755">
    <property type="term" value="P:MyD88-dependent toll-like receptor signaling pathway"/>
    <property type="evidence" value="ECO:0000303"/>
    <property type="project" value="AgBase"/>
</dbReference>
<dbReference type="GO" id="GO:0043066">
    <property type="term" value="P:negative regulation of apoptotic process"/>
    <property type="evidence" value="ECO:0000250"/>
    <property type="project" value="UniProtKB"/>
</dbReference>
<dbReference type="GO" id="GO:0038061">
    <property type="term" value="P:non-canonical NF-kappaB signal transduction"/>
    <property type="evidence" value="ECO:0000318"/>
    <property type="project" value="GO_Central"/>
</dbReference>
<dbReference type="GO" id="GO:0043123">
    <property type="term" value="P:positive regulation of canonical NF-kappaB signal transduction"/>
    <property type="evidence" value="ECO:0000250"/>
    <property type="project" value="UniProtKB"/>
</dbReference>
<dbReference type="GO" id="GO:0008284">
    <property type="term" value="P:positive regulation of cell population proliferation"/>
    <property type="evidence" value="ECO:0000250"/>
    <property type="project" value="UniProtKB"/>
</dbReference>
<dbReference type="GO" id="GO:0051092">
    <property type="term" value="P:positive regulation of NF-kappaB transcription factor activity"/>
    <property type="evidence" value="ECO:0000250"/>
    <property type="project" value="UniProtKB"/>
</dbReference>
<dbReference type="GO" id="GO:0045944">
    <property type="term" value="P:positive regulation of transcription by RNA polymerase II"/>
    <property type="evidence" value="ECO:0000250"/>
    <property type="project" value="UniProtKB"/>
</dbReference>
<dbReference type="GO" id="GO:0034097">
    <property type="term" value="P:response to cytokine"/>
    <property type="evidence" value="ECO:0000318"/>
    <property type="project" value="GO_Central"/>
</dbReference>
<dbReference type="CDD" id="cd01177">
    <property type="entry name" value="IPT_NFkappaB"/>
    <property type="match status" value="1"/>
</dbReference>
<dbReference type="CDD" id="cd07885">
    <property type="entry name" value="RHD-n_RelA"/>
    <property type="match status" value="1"/>
</dbReference>
<dbReference type="FunFam" id="2.60.40.340:FF:000003">
    <property type="entry name" value="NFkB p65 transcription factor"/>
    <property type="match status" value="1"/>
</dbReference>
<dbReference type="FunFam" id="2.60.40.10:FF:000046">
    <property type="entry name" value="Nuclear factor NF-kappa-B p105 subunit"/>
    <property type="match status" value="1"/>
</dbReference>
<dbReference type="Gene3D" id="2.60.40.10">
    <property type="entry name" value="Immunoglobulins"/>
    <property type="match status" value="1"/>
</dbReference>
<dbReference type="Gene3D" id="2.60.40.340">
    <property type="entry name" value="Rel homology domain (RHD), DNA-binding domain"/>
    <property type="match status" value="1"/>
</dbReference>
<dbReference type="InterPro" id="IPR013783">
    <property type="entry name" value="Ig-like_fold"/>
</dbReference>
<dbReference type="InterPro" id="IPR014756">
    <property type="entry name" value="Ig_E-set"/>
</dbReference>
<dbReference type="InterPro" id="IPR002909">
    <property type="entry name" value="IPT_dom"/>
</dbReference>
<dbReference type="InterPro" id="IPR033926">
    <property type="entry name" value="IPT_NFkappaB"/>
</dbReference>
<dbReference type="InterPro" id="IPR000451">
    <property type="entry name" value="NFkB/Dor"/>
</dbReference>
<dbReference type="InterPro" id="IPR008967">
    <property type="entry name" value="p53-like_TF_DNA-bd_sf"/>
</dbReference>
<dbReference type="InterPro" id="IPR030495">
    <property type="entry name" value="RelA_RHD_N"/>
</dbReference>
<dbReference type="InterPro" id="IPR030492">
    <property type="entry name" value="RHD_CS"/>
</dbReference>
<dbReference type="InterPro" id="IPR032397">
    <property type="entry name" value="RHD_dimer"/>
</dbReference>
<dbReference type="InterPro" id="IPR011539">
    <property type="entry name" value="RHD_DNA_bind_dom"/>
</dbReference>
<dbReference type="InterPro" id="IPR037059">
    <property type="entry name" value="RHD_DNA_bind_dom_sf"/>
</dbReference>
<dbReference type="PANTHER" id="PTHR24169">
    <property type="entry name" value="NUCLEAR FACTOR NF-KAPPA-B PROTEIN"/>
    <property type="match status" value="1"/>
</dbReference>
<dbReference type="PANTHER" id="PTHR24169:SF1">
    <property type="entry name" value="TRANSCRIPTION FACTOR P65"/>
    <property type="match status" value="1"/>
</dbReference>
<dbReference type="Pfam" id="PF16179">
    <property type="entry name" value="RHD_dimer"/>
    <property type="match status" value="1"/>
</dbReference>
<dbReference type="Pfam" id="PF00554">
    <property type="entry name" value="RHD_DNA_bind"/>
    <property type="match status" value="1"/>
</dbReference>
<dbReference type="PRINTS" id="PR00057">
    <property type="entry name" value="NFKBTNSCPFCT"/>
</dbReference>
<dbReference type="SMART" id="SM00429">
    <property type="entry name" value="IPT"/>
    <property type="match status" value="1"/>
</dbReference>
<dbReference type="SUPFAM" id="SSF81296">
    <property type="entry name" value="E set domains"/>
    <property type="match status" value="1"/>
</dbReference>
<dbReference type="SUPFAM" id="SSF49417">
    <property type="entry name" value="p53-like transcription factors"/>
    <property type="match status" value="1"/>
</dbReference>
<dbReference type="PROSITE" id="PS01204">
    <property type="entry name" value="REL_1"/>
    <property type="match status" value="1"/>
</dbReference>
<dbReference type="PROSITE" id="PS50254">
    <property type="entry name" value="REL_2"/>
    <property type="match status" value="1"/>
</dbReference>